<keyword id="KW-0342">GTP-binding</keyword>
<keyword id="KW-0378">Hydrolase</keyword>
<keyword id="KW-0547">Nucleotide-binding</keyword>
<keyword id="KW-0539">Nucleus</keyword>
<keyword id="KW-1185">Reference proteome</keyword>
<keyword id="KW-0804">Transcription</keyword>
<keyword id="KW-0805">Transcription regulation</keyword>
<reference evidence="6 7" key="1">
    <citation type="submission" date="2006-10" db="EMBL/GenBank/DDBJ databases">
        <authorList>
            <person name="Pezeron G."/>
            <person name="Lambert G."/>
            <person name="Rosa F.M."/>
            <person name="Mourrain P."/>
        </authorList>
    </citation>
    <scope>NUCLEOTIDE SEQUENCE [MRNA]</scope>
</reference>
<reference key="2">
    <citation type="journal article" date="2013" name="Nature">
        <title>The zebrafish reference genome sequence and its relationship to the human genome.</title>
        <authorList>
            <person name="Howe K."/>
            <person name="Clark M.D."/>
            <person name="Torroja C.F."/>
            <person name="Torrance J."/>
            <person name="Berthelot C."/>
            <person name="Muffato M."/>
            <person name="Collins J.E."/>
            <person name="Humphray S."/>
            <person name="McLaren K."/>
            <person name="Matthews L."/>
            <person name="McLaren S."/>
            <person name="Sealy I."/>
            <person name="Caccamo M."/>
            <person name="Churcher C."/>
            <person name="Scott C."/>
            <person name="Barrett J.C."/>
            <person name="Koch R."/>
            <person name="Rauch G.J."/>
            <person name="White S."/>
            <person name="Chow W."/>
            <person name="Kilian B."/>
            <person name="Quintais L.T."/>
            <person name="Guerra-Assuncao J.A."/>
            <person name="Zhou Y."/>
            <person name="Gu Y."/>
            <person name="Yen J."/>
            <person name="Vogel J.H."/>
            <person name="Eyre T."/>
            <person name="Redmond S."/>
            <person name="Banerjee R."/>
            <person name="Chi J."/>
            <person name="Fu B."/>
            <person name="Langley E."/>
            <person name="Maguire S.F."/>
            <person name="Laird G.K."/>
            <person name="Lloyd D."/>
            <person name="Kenyon E."/>
            <person name="Donaldson S."/>
            <person name="Sehra H."/>
            <person name="Almeida-King J."/>
            <person name="Loveland J."/>
            <person name="Trevanion S."/>
            <person name="Jones M."/>
            <person name="Quail M."/>
            <person name="Willey D."/>
            <person name="Hunt A."/>
            <person name="Burton J."/>
            <person name="Sims S."/>
            <person name="McLay K."/>
            <person name="Plumb B."/>
            <person name="Davis J."/>
            <person name="Clee C."/>
            <person name="Oliver K."/>
            <person name="Clark R."/>
            <person name="Riddle C."/>
            <person name="Elliot D."/>
            <person name="Threadgold G."/>
            <person name="Harden G."/>
            <person name="Ware D."/>
            <person name="Begum S."/>
            <person name="Mortimore B."/>
            <person name="Kerry G."/>
            <person name="Heath P."/>
            <person name="Phillimore B."/>
            <person name="Tracey A."/>
            <person name="Corby N."/>
            <person name="Dunn M."/>
            <person name="Johnson C."/>
            <person name="Wood J."/>
            <person name="Clark S."/>
            <person name="Pelan S."/>
            <person name="Griffiths G."/>
            <person name="Smith M."/>
            <person name="Glithero R."/>
            <person name="Howden P."/>
            <person name="Barker N."/>
            <person name="Lloyd C."/>
            <person name="Stevens C."/>
            <person name="Harley J."/>
            <person name="Holt K."/>
            <person name="Panagiotidis G."/>
            <person name="Lovell J."/>
            <person name="Beasley H."/>
            <person name="Henderson C."/>
            <person name="Gordon D."/>
            <person name="Auger K."/>
            <person name="Wright D."/>
            <person name="Collins J."/>
            <person name="Raisen C."/>
            <person name="Dyer L."/>
            <person name="Leung K."/>
            <person name="Robertson L."/>
            <person name="Ambridge K."/>
            <person name="Leongamornlert D."/>
            <person name="McGuire S."/>
            <person name="Gilderthorp R."/>
            <person name="Griffiths C."/>
            <person name="Manthravadi D."/>
            <person name="Nichol S."/>
            <person name="Barker G."/>
            <person name="Whitehead S."/>
            <person name="Kay M."/>
            <person name="Brown J."/>
            <person name="Murnane C."/>
            <person name="Gray E."/>
            <person name="Humphries M."/>
            <person name="Sycamore N."/>
            <person name="Barker D."/>
            <person name="Saunders D."/>
            <person name="Wallis J."/>
            <person name="Babbage A."/>
            <person name="Hammond S."/>
            <person name="Mashreghi-Mohammadi M."/>
            <person name="Barr L."/>
            <person name="Martin S."/>
            <person name="Wray P."/>
            <person name="Ellington A."/>
            <person name="Matthews N."/>
            <person name="Ellwood M."/>
            <person name="Woodmansey R."/>
            <person name="Clark G."/>
            <person name="Cooper J."/>
            <person name="Tromans A."/>
            <person name="Grafham D."/>
            <person name="Skuce C."/>
            <person name="Pandian R."/>
            <person name="Andrews R."/>
            <person name="Harrison E."/>
            <person name="Kimberley A."/>
            <person name="Garnett J."/>
            <person name="Fosker N."/>
            <person name="Hall R."/>
            <person name="Garner P."/>
            <person name="Kelly D."/>
            <person name="Bird C."/>
            <person name="Palmer S."/>
            <person name="Gehring I."/>
            <person name="Berger A."/>
            <person name="Dooley C.M."/>
            <person name="Ersan-Urun Z."/>
            <person name="Eser C."/>
            <person name="Geiger H."/>
            <person name="Geisler M."/>
            <person name="Karotki L."/>
            <person name="Kirn A."/>
            <person name="Konantz J."/>
            <person name="Konantz M."/>
            <person name="Oberlander M."/>
            <person name="Rudolph-Geiger S."/>
            <person name="Teucke M."/>
            <person name="Lanz C."/>
            <person name="Raddatz G."/>
            <person name="Osoegawa K."/>
            <person name="Zhu B."/>
            <person name="Rapp A."/>
            <person name="Widaa S."/>
            <person name="Langford C."/>
            <person name="Yang F."/>
            <person name="Schuster S.C."/>
            <person name="Carter N.P."/>
            <person name="Harrow J."/>
            <person name="Ning Z."/>
            <person name="Herrero J."/>
            <person name="Searle S.M."/>
            <person name="Enright A."/>
            <person name="Geisler R."/>
            <person name="Plasterk R.H."/>
            <person name="Lee C."/>
            <person name="Westerfield M."/>
            <person name="de Jong P.J."/>
            <person name="Zon L.I."/>
            <person name="Postlethwait J.H."/>
            <person name="Nusslein-Volhard C."/>
            <person name="Hubbard T.J."/>
            <person name="Roest Crollius H."/>
            <person name="Rogers J."/>
            <person name="Stemple D.L."/>
        </authorList>
    </citation>
    <scope>NUCLEOTIDE SEQUENCE [LARGE SCALE GENOMIC DNA]</scope>
    <source>
        <strain>Tuebingen</strain>
    </source>
</reference>
<sequence>MRLLIEQPRTMSSGSSNFLLVPIPEYPVLDCVPNKNVKIVVLGASNVGKTALIVRFLTKRFIGDYEANTGALYSRKINLDGEQVSLQVQDTPCVSLQDDADGLYCQEQINRSIYWADGYVLVFSITDLNSYRTIQPLYQHVRRIHPSGNIPVIIVGNKSDLLRARQVSDPEGKALADELGGLYFEASARENHESVQAAFLHLCQEVSRALGGGNGEKRKGGLHLARPKSPNMQELKRRFRQVLSSKVKSATAL</sequence>
<evidence type="ECO:0000250" key="1"/>
<evidence type="ECO:0000250" key="2">
    <source>
        <dbReference type="UniProtKB" id="P01116"/>
    </source>
</evidence>
<evidence type="ECO:0000250" key="3">
    <source>
        <dbReference type="UniProtKB" id="Q96A58"/>
    </source>
</evidence>
<evidence type="ECO:0000255" key="4"/>
<evidence type="ECO:0000256" key="5">
    <source>
        <dbReference type="SAM" id="MobiDB-lite"/>
    </source>
</evidence>
<evidence type="ECO:0000305" key="6"/>
<evidence type="ECO:0000312" key="7">
    <source>
        <dbReference type="EMBL" id="ABK96901.1"/>
    </source>
</evidence>
<comment type="function">
    <text evidence="1">Regulator of rDNA transcription.</text>
</comment>
<comment type="catalytic activity">
    <reaction evidence="2">
        <text>GTP + H2O = GDP + phosphate + H(+)</text>
        <dbReference type="Rhea" id="RHEA:19669"/>
        <dbReference type="ChEBI" id="CHEBI:15377"/>
        <dbReference type="ChEBI" id="CHEBI:15378"/>
        <dbReference type="ChEBI" id="CHEBI:37565"/>
        <dbReference type="ChEBI" id="CHEBI:43474"/>
        <dbReference type="ChEBI" id="CHEBI:58189"/>
        <dbReference type="EC" id="3.6.5.2"/>
    </reaction>
</comment>
<comment type="subcellular location">
    <subcellularLocation>
        <location evidence="1">Nucleus</location>
        <location evidence="1">Nucleolus</location>
    </subcellularLocation>
    <text evidence="1">Associates with rDNA transcription unit throughout the cell cycle.</text>
</comment>
<comment type="similarity">
    <text evidence="4">Belongs to the small GTPase superfamily. Ras family.</text>
</comment>
<comment type="caution">
    <text evidence="6">Although highly related to the Ras family, lacks the conserved prenylation motif at the C-terminus, which serves to target Ras proteins to membrane compartments.</text>
</comment>
<feature type="chain" id="PRO_0000308363" description="Ras-like protein family member 11A-like">
    <location>
        <begin position="1"/>
        <end position="253"/>
    </location>
</feature>
<feature type="region of interest" description="Disordered" evidence="5">
    <location>
        <begin position="213"/>
        <end position="233"/>
    </location>
</feature>
<feature type="binding site" evidence="3">
    <location>
        <begin position="43"/>
        <end position="50"/>
    </location>
    <ligand>
        <name>GTP</name>
        <dbReference type="ChEBI" id="CHEBI:37565"/>
    </ligand>
</feature>
<feature type="binding site" evidence="3">
    <location>
        <begin position="90"/>
        <end position="97"/>
    </location>
    <ligand>
        <name>GTP</name>
        <dbReference type="ChEBI" id="CHEBI:37565"/>
    </ligand>
</feature>
<feature type="binding site" evidence="3">
    <location>
        <begin position="157"/>
        <end position="160"/>
    </location>
    <ligand>
        <name>GTP</name>
        <dbReference type="ChEBI" id="CHEBI:37565"/>
    </ligand>
</feature>
<protein>
    <recommendedName>
        <fullName>Ras-like protein family member 11A-like</fullName>
        <ecNumber evidence="2">3.6.5.2</ecNumber>
    </recommendedName>
</protein>
<dbReference type="EC" id="3.6.5.2" evidence="2"/>
<dbReference type="EMBL" id="EF088669">
    <property type="protein sequence ID" value="ABK96901.1"/>
    <property type="molecule type" value="mRNA"/>
</dbReference>
<dbReference type="EMBL" id="CR381676">
    <property type="status" value="NOT_ANNOTATED_CDS"/>
    <property type="molecule type" value="Genomic_DNA"/>
</dbReference>
<dbReference type="RefSeq" id="NP_001017840.2">
    <property type="nucleotide sequence ID" value="NM_001017840.2"/>
</dbReference>
<dbReference type="SMR" id="A1DZY4"/>
<dbReference type="FunCoup" id="A1DZY4">
    <property type="interactions" value="273"/>
</dbReference>
<dbReference type="STRING" id="7955.ENSDARP00000067646"/>
<dbReference type="PaxDb" id="7955-ENSDARP00000067646"/>
<dbReference type="Ensembl" id="ENSDART00000067647">
    <property type="protein sequence ID" value="ENSDARP00000067646"/>
    <property type="gene ID" value="ENSDARG00000046013"/>
</dbReference>
<dbReference type="GeneID" id="550538"/>
<dbReference type="KEGG" id="dre:550538"/>
<dbReference type="AGR" id="ZFIN:ZDB-GENE-050417-384"/>
<dbReference type="CTD" id="387496"/>
<dbReference type="ZFIN" id="ZDB-GENE-050417-384">
    <property type="gene designation" value="rasl11a"/>
</dbReference>
<dbReference type="eggNOG" id="KOG0395">
    <property type="taxonomic scope" value="Eukaryota"/>
</dbReference>
<dbReference type="HOGENOM" id="CLU_041217_9_7_1"/>
<dbReference type="InParanoid" id="A1DZY4"/>
<dbReference type="OMA" id="ARENHDG"/>
<dbReference type="OrthoDB" id="18798at2759"/>
<dbReference type="PhylomeDB" id="A1DZY4"/>
<dbReference type="TreeFam" id="TF318030"/>
<dbReference type="PRO" id="PR:A1DZY4"/>
<dbReference type="Proteomes" id="UP000000437">
    <property type="component" value="Chromosome 7"/>
</dbReference>
<dbReference type="Bgee" id="ENSDARG00000046013">
    <property type="expression patterns" value="Expressed in spleen and 28 other cell types or tissues"/>
</dbReference>
<dbReference type="GO" id="GO:0005730">
    <property type="term" value="C:nucleolus"/>
    <property type="evidence" value="ECO:0000250"/>
    <property type="project" value="UniProtKB"/>
</dbReference>
<dbReference type="GO" id="GO:0003925">
    <property type="term" value="F:G protein activity"/>
    <property type="evidence" value="ECO:0007669"/>
    <property type="project" value="UniProtKB-EC"/>
</dbReference>
<dbReference type="GO" id="GO:0005525">
    <property type="term" value="F:GTP binding"/>
    <property type="evidence" value="ECO:0007669"/>
    <property type="project" value="UniProtKB-KW"/>
</dbReference>
<dbReference type="GO" id="GO:0045943">
    <property type="term" value="P:positive regulation of transcription by RNA polymerase I"/>
    <property type="evidence" value="ECO:0000250"/>
    <property type="project" value="UniProtKB"/>
</dbReference>
<dbReference type="CDD" id="cd04146">
    <property type="entry name" value="RERG_RasL11_like"/>
    <property type="match status" value="1"/>
</dbReference>
<dbReference type="FunFam" id="3.40.50.300:FF:000718">
    <property type="entry name" value="Ras-like protein family member 11A"/>
    <property type="match status" value="1"/>
</dbReference>
<dbReference type="Gene3D" id="3.40.50.300">
    <property type="entry name" value="P-loop containing nucleotide triphosphate hydrolases"/>
    <property type="match status" value="1"/>
</dbReference>
<dbReference type="InterPro" id="IPR027417">
    <property type="entry name" value="P-loop_NTPase"/>
</dbReference>
<dbReference type="InterPro" id="IPR051065">
    <property type="entry name" value="Ras-related_GTPase"/>
</dbReference>
<dbReference type="InterPro" id="IPR005225">
    <property type="entry name" value="Small_GTP-bd"/>
</dbReference>
<dbReference type="InterPro" id="IPR001806">
    <property type="entry name" value="Small_GTPase"/>
</dbReference>
<dbReference type="NCBIfam" id="TIGR00231">
    <property type="entry name" value="small_GTP"/>
    <property type="match status" value="1"/>
</dbReference>
<dbReference type="PANTHER" id="PTHR45704">
    <property type="entry name" value="RAS-LIKE FAMILY MEMBER 11"/>
    <property type="match status" value="1"/>
</dbReference>
<dbReference type="Pfam" id="PF00071">
    <property type="entry name" value="Ras"/>
    <property type="match status" value="1"/>
</dbReference>
<dbReference type="PRINTS" id="PR00449">
    <property type="entry name" value="RASTRNSFRMNG"/>
</dbReference>
<dbReference type="SMART" id="SM00175">
    <property type="entry name" value="RAB"/>
    <property type="match status" value="1"/>
</dbReference>
<dbReference type="SMART" id="SM00173">
    <property type="entry name" value="RAS"/>
    <property type="match status" value="1"/>
</dbReference>
<dbReference type="SMART" id="SM00174">
    <property type="entry name" value="RHO"/>
    <property type="match status" value="1"/>
</dbReference>
<dbReference type="SUPFAM" id="SSF52540">
    <property type="entry name" value="P-loop containing nucleoside triphosphate hydrolases"/>
    <property type="match status" value="1"/>
</dbReference>
<dbReference type="PROSITE" id="PS51421">
    <property type="entry name" value="RAS"/>
    <property type="match status" value="1"/>
</dbReference>
<gene>
    <name type="ORF">zgc:110179</name>
</gene>
<name>RSLBL_DANRE</name>
<proteinExistence type="evidence at transcript level"/>
<organism>
    <name type="scientific">Danio rerio</name>
    <name type="common">Zebrafish</name>
    <name type="synonym">Brachydanio rerio</name>
    <dbReference type="NCBI Taxonomy" id="7955"/>
    <lineage>
        <taxon>Eukaryota</taxon>
        <taxon>Metazoa</taxon>
        <taxon>Chordata</taxon>
        <taxon>Craniata</taxon>
        <taxon>Vertebrata</taxon>
        <taxon>Euteleostomi</taxon>
        <taxon>Actinopterygii</taxon>
        <taxon>Neopterygii</taxon>
        <taxon>Teleostei</taxon>
        <taxon>Ostariophysi</taxon>
        <taxon>Cypriniformes</taxon>
        <taxon>Danionidae</taxon>
        <taxon>Danioninae</taxon>
        <taxon>Danio</taxon>
    </lineage>
</organism>
<accession>A1DZY4</accession>